<sequence length="670" mass="74178">MEETEKKIATQEGRLFSKMKVFLLSLTCACLTKSLSGVYMNSMLTQIERQFDISTSVAGLINGSFEIGNLFFIVFVSYFGTKLHRPVVIGIGCVIMGLGCLLMSLPHFFMGRYEYETTISPTGNLSSNSFLCMENRTQTLKPTQDPAECVKEMKSLMWICVMVGNIIRGIGETPIVPLGISYIEDFAKSENSPLYIGILEMGKVAGPIFGLLLGSYCAQIYVDIGSVNTDDLTITPSDTRWVGAWWIGFLVCAGVNILTSIPFFFLPKALPKKGQQENVAVTKDGKVEKYGGQAREENLGITKDFLTFMKRLFCNPIYMLFILTSVLQVNGFINKFTFLPKYLEQQYGKSTAEAIFLIGVYSLPPICLGYLIGGFIMKKFKITVKKAAYLAFCLSVFEYLLFLCHFMLTCDNAAVAGLTTSYKGVQHQLHVESKVLADCNTRCSCSTNTWDPVCGDNGVAYMSACLAGCKKFVGTGTNMVFQDCSCIQSLGNSSAVLGLCKKGPECANRLQYFLILTIIISFIYSLTAIPGYMVFLRCVKSEEKSLGVGLHTFCIRVFAGIPAPVYFGALIDRTCLHWGTLKCGQRGACRMYDINSFRHIYLGLPIALRGSSYLPAFFILILMRKFQFPGDIDSSATDHTEMMLGEKESEHTDVHGSPQVENDGELKTKL</sequence>
<evidence type="ECO:0000250" key="1">
    <source>
        <dbReference type="UniProtKB" id="Q9QXZ6"/>
    </source>
</evidence>
<evidence type="ECO:0000255" key="2"/>
<evidence type="ECO:0000255" key="3">
    <source>
        <dbReference type="PROSITE-ProRule" id="PRU00798"/>
    </source>
</evidence>
<evidence type="ECO:0000256" key="4">
    <source>
        <dbReference type="SAM" id="MobiDB-lite"/>
    </source>
</evidence>
<evidence type="ECO:0000269" key="5">
    <source>
    </source>
</evidence>
<evidence type="ECO:0000269" key="6">
    <source>
    </source>
</evidence>
<evidence type="ECO:0000269" key="7">
    <source>
    </source>
</evidence>
<evidence type="ECO:0000269" key="8">
    <source>
    </source>
</evidence>
<evidence type="ECO:0000269" key="9">
    <source>
    </source>
</evidence>
<evidence type="ECO:0000303" key="10">
    <source>
    </source>
</evidence>
<evidence type="ECO:0000303" key="11">
    <source>
    </source>
</evidence>
<evidence type="ECO:0000305" key="12"/>
<evidence type="ECO:0000305" key="13">
    <source>
    </source>
</evidence>
<evidence type="ECO:0000312" key="14">
    <source>
        <dbReference type="RGD" id="3700"/>
    </source>
</evidence>
<reference key="1">
    <citation type="journal article" date="1994" name="Proc. Natl. Acad. Sci. U.S.A.">
        <title>Expression cloning of a rat liver Na(+)-independent organic anion transporter.</title>
        <authorList>
            <person name="Jacquemin E."/>
            <person name="Hagenbuch B."/>
            <person name="Stieger B."/>
            <person name="Wolkoff A.W."/>
            <person name="Meier P.J."/>
        </authorList>
    </citation>
    <scope>NUCLEOTIDE SEQUENCE [MRNA]</scope>
    <scope>CHARACTERIZATION</scope>
    <scope>GLYCOSYLATION</scope>
    <source>
        <strain>Sprague-Dawley</strain>
        <tissue>Liver</tissue>
    </source>
</reference>
<reference key="2">
    <citation type="journal article" date="2005" name="J. Biol. Chem.">
        <title>Interaction with PDZK1 is required for expression of organic anion transporting protein 1A1 on the hepatocyte surface.</title>
        <authorList>
            <person name="Wang P."/>
            <person name="Wang J.J."/>
            <person name="Xiao Y."/>
            <person name="Murray J.W."/>
            <person name="Novikoff P.M."/>
            <person name="Angeletti R.H."/>
            <person name="Orr G.A."/>
            <person name="Lan D."/>
            <person name="Silver D.L."/>
            <person name="Wolkoff A.W."/>
        </authorList>
    </citation>
    <scope>INTERACTION WITH PDZK1</scope>
    <scope>MUTAGENESIS OF 666-LYS--LEU-670</scope>
</reference>
<reference key="3">
    <citation type="journal article" date="2006" name="Biochemistry">
        <title>Rat organic anion transporting protein 1A1 (Oatp1a1): purification and phosphopeptide assignment.</title>
        <authorList>
            <person name="Xiao Y."/>
            <person name="Nieves E."/>
            <person name="Angeletti R.H."/>
            <person name="Orr G.A."/>
            <person name="Wolkoff A.W."/>
        </authorList>
    </citation>
    <scope>PHOSPHORYLATION AT SER-634 AND SER-635</scope>
</reference>
<reference key="4">
    <citation type="journal article" date="2008" name="Am. J. Physiol.">
        <title>Topological assessment of oatp1a1: a 12-transmembrane domain integral membrane protein with three N-linked carbohydrate chains.</title>
        <authorList>
            <person name="Wang P."/>
            <person name="Hata S."/>
            <person name="Xiao Y."/>
            <person name="Murray J.W."/>
            <person name="Wolkoff A.W."/>
        </authorList>
    </citation>
    <scope>SUBCELLULAR LOCATION</scope>
    <scope>MEMBRANE TOPOLOGY</scope>
    <scope>GLYCOSYLATION AT ASN-124; ASN-135 AND ASN-492</scope>
</reference>
<reference key="5">
    <citation type="journal article" date="2009" name="Am. J. Physiol.">
        <title>Mechanisms of pH-gradient driven transport mediated by organic anion polypeptide transporters.</title>
        <authorList>
            <person name="Leuthold S."/>
            <person name="Hagenbuch B."/>
            <person name="Mohebbi N."/>
            <person name="Wagner C.A."/>
            <person name="Meier P.J."/>
            <person name="Stieger B."/>
        </authorList>
    </citation>
    <scope>FUNCTION</scope>
    <scope>TRANSPORTER ACTIVITY</scope>
    <scope>BIOPHYSICOCHEMICAL PROPERTIES</scope>
    <scope>MUTAGENESIS OF HIS-107</scope>
</reference>
<reference key="6">
    <citation type="journal article" date="2012" name="Nat. Commun.">
        <title>Quantitative maps of protein phosphorylation sites across 14 different rat organs and tissues.</title>
        <authorList>
            <person name="Lundby A."/>
            <person name="Secher A."/>
            <person name="Lage K."/>
            <person name="Nordsborg N.B."/>
            <person name="Dmytriyev A."/>
            <person name="Lundby C."/>
            <person name="Olsen J.V."/>
        </authorList>
    </citation>
    <scope>IDENTIFICATION BY MASS SPECTROMETRY [LARGE SCALE ANALYSIS]</scope>
</reference>
<gene>
    <name evidence="14" type="primary">Slco1a1</name>
    <name evidence="11" type="synonym">Oatp1</name>
    <name evidence="10" type="synonym">Oatp1a1</name>
    <name type="synonym">Slc21a1</name>
</gene>
<comment type="function">
    <text evidence="1 8">Mediates the Na(+)-independent transport of organic anions such as steroid sulfate conjugates (dehydroepiandrosterone sulfate (DHEAS), 17-beta-glucuronosyl estradiol, estrone-3-sulfate), conjugated (taurocholate) and unconjugated (cholate) bile acids, prostaglandin E2 (PGE2) and L-thyroxine T4 (PubMed:19129463). Also capable of transporting sulfobromophthalein (BSP), ouabain and gadoxetate (By similarity). Hydrogencarbonate/HCO3(-) acts as the probable counteranion that exchanges for organic anions (PubMed:19129463). Shows a pH-sensitive substrate specificity which may be ascribed to the protonation state of the binding site and leads to a stimulation of substrate transport in an acidic microenvironment (PubMed:19129463).</text>
</comment>
<comment type="catalytic activity">
    <reaction evidence="8">
        <text>estrone 3-sulfate(out) + hydrogencarbonate(in) = estrone 3-sulfate(in) + hydrogencarbonate(out)</text>
        <dbReference type="Rhea" id="RHEA:73055"/>
        <dbReference type="ChEBI" id="CHEBI:17544"/>
        <dbReference type="ChEBI" id="CHEBI:60050"/>
    </reaction>
</comment>
<comment type="catalytic activity">
    <reaction evidence="8">
        <text>taurocholate(out) + hydrogencarbonate(in) = taurocholate(in) + hydrogencarbonate(out)</text>
        <dbReference type="Rhea" id="RHEA:73051"/>
        <dbReference type="ChEBI" id="CHEBI:17544"/>
        <dbReference type="ChEBI" id="CHEBI:36257"/>
    </reaction>
</comment>
<comment type="catalytic activity">
    <reaction evidence="13">
        <text>L-thyroxine(out) = L-thyroxine(in)</text>
        <dbReference type="Rhea" id="RHEA:71819"/>
        <dbReference type="ChEBI" id="CHEBI:58448"/>
    </reaction>
</comment>
<comment type="catalytic activity">
    <reaction evidence="13">
        <text>prostaglandin E2(out) = prostaglandin E2(in)</text>
        <dbReference type="Rhea" id="RHEA:50984"/>
        <dbReference type="ChEBI" id="CHEBI:606564"/>
    </reaction>
</comment>
<comment type="catalytic activity">
    <reaction evidence="1">
        <text>17beta-estradiol 17-O-(beta-D-glucuronate)(out) = 17beta-estradiol 17-O-(beta-D-glucuronate)(in)</text>
        <dbReference type="Rhea" id="RHEA:72691"/>
        <dbReference type="ChEBI" id="CHEBI:82961"/>
    </reaction>
</comment>
<comment type="catalytic activity">
    <reaction evidence="1">
        <text>dehydroepiandrosterone 3-sulfate(out) = dehydroepiandrosterone 3-sulfate(in)</text>
        <dbReference type="Rhea" id="RHEA:71839"/>
        <dbReference type="ChEBI" id="CHEBI:57905"/>
    </reaction>
</comment>
<comment type="biophysicochemical properties">
    <kinetics>
        <KM evidence="8">20.4 uM for estrone 3-sulfate (at pH 6.5)</KM>
        <KM evidence="8">39 uM for estrone 3-sulfate (at pH 8.0)</KM>
        <KM evidence="8">31.7 uM for taurocholate (at pH 6.5)</KM>
        <KM evidence="8">79 uM for taurocholate (at pH 8.0)</KM>
        <Vmax evidence="8">1529.0 pmol/min/mg enzyme with estrone-3-sulfate as substrate (at pH 6.5)</Vmax>
        <Vmax evidence="8">1689.0 pmol/min/mg enzyme with estrone-3-sulfate as substrate (at pH 8.0)</Vmax>
        <Vmax evidence="8">617.0 pmol/min/mg enzyme with taurocholate as substrate (at pH 6.5)</Vmax>
        <Vmax evidence="8">710.0 pmol/min/mg enzyme with taurocholate as substrate (at pH 8.0)</Vmax>
    </kinetics>
    <phDependence>
        <text evidence="8">Optimum pH is 6.5 with estrone 3-sulfate, taurocholate, prostaglandin E2 and L-thyroxine T4 as substrates.</text>
    </phDependence>
</comment>
<comment type="subunit">
    <text evidence="5">Binds to PDZK1. Interaction with PDZK1 is required for expression on hepatocyte surface.</text>
</comment>
<comment type="subcellular location">
    <subcellularLocation>
        <location evidence="7">Basolateral cell membrane</location>
        <topology evidence="7">Multi-pass membrane protein</topology>
    </subcellularLocation>
</comment>
<comment type="tissue specificity">
    <text>Highly expressed in liver and kidney, and at lower levels in brain, lung, skeletal muscle and proximal colon.</text>
</comment>
<comment type="PTM">
    <text evidence="7 9">Glycosylated.</text>
</comment>
<comment type="similarity">
    <text evidence="12">Belongs to the organo anion transporter (TC 2.A.60) family.</text>
</comment>
<name>SO1A1_RAT</name>
<proteinExistence type="evidence at protein level"/>
<feature type="chain" id="PRO_0000191041" description="Solute carrier organic anion transporter family member 1A1">
    <location>
        <begin position="1"/>
        <end position="670"/>
    </location>
</feature>
<feature type="topological domain" description="Cytoplasmic" evidence="2">
    <location>
        <begin position="1"/>
        <end position="20"/>
    </location>
</feature>
<feature type="transmembrane region" description="Helical; Name=1" evidence="2">
    <location>
        <begin position="21"/>
        <end position="40"/>
    </location>
</feature>
<feature type="topological domain" description="Extracellular" evidence="2">
    <location>
        <begin position="41"/>
        <end position="59"/>
    </location>
</feature>
<feature type="transmembrane region" description="Helical; Name=2" evidence="2">
    <location>
        <begin position="60"/>
        <end position="80"/>
    </location>
</feature>
<feature type="topological domain" description="Cytoplasmic" evidence="2">
    <location>
        <begin position="81"/>
        <end position="86"/>
    </location>
</feature>
<feature type="transmembrane region" description="Helical; Name=3" evidence="2">
    <location>
        <begin position="87"/>
        <end position="111"/>
    </location>
</feature>
<feature type="topological domain" description="Extracellular" evidence="2">
    <location>
        <begin position="112"/>
        <end position="155"/>
    </location>
</feature>
<feature type="transmembrane region" description="Helical; Name=4" evidence="2">
    <location>
        <begin position="156"/>
        <end position="184"/>
    </location>
</feature>
<feature type="topological domain" description="Cytoplasmic" evidence="2">
    <location>
        <begin position="185"/>
        <end position="203"/>
    </location>
</feature>
<feature type="transmembrane region" description="Helical; Name=5" evidence="2">
    <location>
        <begin position="204"/>
        <end position="224"/>
    </location>
</feature>
<feature type="topological domain" description="Extracellular" evidence="2">
    <location>
        <begin position="225"/>
        <end position="242"/>
    </location>
</feature>
<feature type="transmembrane region" description="Helical; Name=6" evidence="2">
    <location>
        <begin position="243"/>
        <end position="267"/>
    </location>
</feature>
<feature type="topological domain" description="Cytoplasmic" evidence="2">
    <location>
        <begin position="268"/>
        <end position="311"/>
    </location>
</feature>
<feature type="transmembrane region" description="Helical; Name=7" evidence="2">
    <location>
        <begin position="312"/>
        <end position="333"/>
    </location>
</feature>
<feature type="topological domain" description="Extracellular" evidence="2">
    <location>
        <begin position="334"/>
        <end position="353"/>
    </location>
</feature>
<feature type="transmembrane region" description="Helical; Name=8" evidence="2">
    <location>
        <begin position="354"/>
        <end position="377"/>
    </location>
</feature>
<feature type="topological domain" description="Cytoplasmic" evidence="2">
    <location>
        <begin position="378"/>
        <end position="381"/>
    </location>
</feature>
<feature type="transmembrane region" description="Helical; Name=9" evidence="2">
    <location>
        <begin position="382"/>
        <end position="405"/>
    </location>
</feature>
<feature type="topological domain" description="Extracellular" evidence="2">
    <location>
        <begin position="406"/>
        <end position="513"/>
    </location>
</feature>
<feature type="transmembrane region" description="Helical; Name=10" evidence="2">
    <location>
        <begin position="514"/>
        <end position="536"/>
    </location>
</feature>
<feature type="topological domain" description="Cytoplasmic" evidence="2">
    <location>
        <begin position="537"/>
        <end position="545"/>
    </location>
</feature>
<feature type="transmembrane region" description="Helical; Name=11" evidence="2">
    <location>
        <begin position="546"/>
        <end position="571"/>
    </location>
</feature>
<feature type="topological domain" description="Extracellular" evidence="2">
    <location>
        <begin position="572"/>
        <end position="605"/>
    </location>
</feature>
<feature type="transmembrane region" description="Helical; Name=12" evidence="2">
    <location>
        <begin position="606"/>
        <end position="623"/>
    </location>
</feature>
<feature type="topological domain" description="Cytoplasmic" evidence="2">
    <location>
        <begin position="624"/>
        <end position="670"/>
    </location>
</feature>
<feature type="domain" description="Kazal-like" evidence="3">
    <location>
        <begin position="433"/>
        <end position="488"/>
    </location>
</feature>
<feature type="region of interest" description="Disordered" evidence="4">
    <location>
        <begin position="645"/>
        <end position="670"/>
    </location>
</feature>
<feature type="compositionally biased region" description="Basic and acidic residues" evidence="4">
    <location>
        <begin position="645"/>
        <end position="654"/>
    </location>
</feature>
<feature type="site" description="Essential for pH-sensitivity of estrone 3-sulfate transport" evidence="8">
    <location>
        <position position="107"/>
    </location>
</feature>
<feature type="modified residue" description="Phosphoserine" evidence="6">
    <location>
        <position position="634"/>
    </location>
</feature>
<feature type="modified residue" description="Phosphoserine" evidence="6">
    <location>
        <position position="635"/>
    </location>
</feature>
<feature type="glycosylation site" description="N-linked (GlcNAc...) asparagine" evidence="7">
    <location>
        <position position="124"/>
    </location>
</feature>
<feature type="glycosylation site" description="N-linked (GlcNAc...) asparagine" evidence="7">
    <location>
        <position position="135"/>
    </location>
</feature>
<feature type="glycosylation site" description="N-linked (GlcNAc...) asparagine" evidence="7">
    <location>
        <position position="492"/>
    </location>
</feature>
<feature type="disulfide bond" evidence="3">
    <location>
        <begin position="439"/>
        <end position="469"/>
    </location>
</feature>
<feature type="disulfide bond" evidence="3">
    <location>
        <begin position="445"/>
        <end position="465"/>
    </location>
</feature>
<feature type="disulfide bond" evidence="3">
    <location>
        <begin position="454"/>
        <end position="486"/>
    </location>
</feature>
<feature type="mutagenesis site" description="Loss of pH-sensitivity of estrone 3-sulfate transport." evidence="8">
    <original>H</original>
    <variation>Q</variation>
    <location>
        <position position="107"/>
    </location>
</feature>
<feature type="mutagenesis site" description="Abolishes binding to PDZK1." evidence="5">
    <location>
        <begin position="666"/>
        <end position="670"/>
    </location>
</feature>
<organism>
    <name type="scientific">Rattus norvegicus</name>
    <name type="common">Rat</name>
    <dbReference type="NCBI Taxonomy" id="10116"/>
    <lineage>
        <taxon>Eukaryota</taxon>
        <taxon>Metazoa</taxon>
        <taxon>Chordata</taxon>
        <taxon>Craniata</taxon>
        <taxon>Vertebrata</taxon>
        <taxon>Euteleostomi</taxon>
        <taxon>Mammalia</taxon>
        <taxon>Eutheria</taxon>
        <taxon>Euarchontoglires</taxon>
        <taxon>Glires</taxon>
        <taxon>Rodentia</taxon>
        <taxon>Myomorpha</taxon>
        <taxon>Muroidea</taxon>
        <taxon>Muridae</taxon>
        <taxon>Murinae</taxon>
        <taxon>Rattus</taxon>
    </lineage>
</organism>
<keyword id="KW-1003">Cell membrane</keyword>
<keyword id="KW-1015">Disulfide bond</keyword>
<keyword id="KW-0325">Glycoprotein</keyword>
<keyword id="KW-0406">Ion transport</keyword>
<keyword id="KW-0472">Membrane</keyword>
<keyword id="KW-0597">Phosphoprotein</keyword>
<keyword id="KW-1185">Reference proteome</keyword>
<keyword id="KW-0812">Transmembrane</keyword>
<keyword id="KW-1133">Transmembrane helix</keyword>
<keyword id="KW-0813">Transport</keyword>
<accession>P46720</accession>
<dbReference type="EMBL" id="L19031">
    <property type="protein sequence ID" value="AAA16451.1"/>
    <property type="molecule type" value="mRNA"/>
</dbReference>
<dbReference type="PIR" id="A49580">
    <property type="entry name" value="A49580"/>
</dbReference>
<dbReference type="RefSeq" id="NP_058807.1">
    <property type="nucleotide sequence ID" value="NM_017111.2"/>
</dbReference>
<dbReference type="RefSeq" id="XP_063142689.1">
    <property type="nucleotide sequence ID" value="XM_063286619.1"/>
</dbReference>
<dbReference type="SMR" id="P46720"/>
<dbReference type="STRING" id="10116.ENSRNOP00000040752"/>
<dbReference type="BindingDB" id="P46720"/>
<dbReference type="ChEMBL" id="CHEMBL1781859"/>
<dbReference type="TCDB" id="2.A.60.1.1">
    <property type="family name" value="the organo anion transporter (oat) family"/>
</dbReference>
<dbReference type="GlyCosmos" id="P46720">
    <property type="glycosylation" value="3 sites, No reported glycans"/>
</dbReference>
<dbReference type="GlyGen" id="P46720">
    <property type="glycosylation" value="3 sites"/>
</dbReference>
<dbReference type="iPTMnet" id="P46720"/>
<dbReference type="PhosphoSitePlus" id="P46720"/>
<dbReference type="PaxDb" id="10116-ENSRNOP00000040752"/>
<dbReference type="Ensembl" id="ENSRNOT00000102966.1">
    <property type="protein sequence ID" value="ENSRNOP00000078030.1"/>
    <property type="gene ID" value="ENSRNOG00000036984.5"/>
</dbReference>
<dbReference type="GeneID" id="50572"/>
<dbReference type="KEGG" id="rno:50572"/>
<dbReference type="AGR" id="RGD:3700"/>
<dbReference type="CTD" id="28248"/>
<dbReference type="RGD" id="3700">
    <property type="gene designation" value="Slco1a1"/>
</dbReference>
<dbReference type="eggNOG" id="KOG3626">
    <property type="taxonomic scope" value="Eukaryota"/>
</dbReference>
<dbReference type="GeneTree" id="ENSGT01130000278312"/>
<dbReference type="HOGENOM" id="CLU_008954_4_0_1"/>
<dbReference type="InParanoid" id="P46720"/>
<dbReference type="OMA" id="TCTEKRA"/>
<dbReference type="OrthoDB" id="5062115at2759"/>
<dbReference type="PhylomeDB" id="P46720"/>
<dbReference type="SABIO-RK" id="P46720"/>
<dbReference type="PRO" id="PR:P46720"/>
<dbReference type="Proteomes" id="UP000002494">
    <property type="component" value="Chromosome 4"/>
</dbReference>
<dbReference type="Bgee" id="ENSRNOG00000036984">
    <property type="expression patterns" value="Expressed in adult mammalian kidney and 2 other cell types or tissues"/>
</dbReference>
<dbReference type="GO" id="GO:0016323">
    <property type="term" value="C:basolateral plasma membrane"/>
    <property type="evidence" value="ECO:0000318"/>
    <property type="project" value="GO_Central"/>
</dbReference>
<dbReference type="GO" id="GO:0016020">
    <property type="term" value="C:membrane"/>
    <property type="evidence" value="ECO:0000314"/>
    <property type="project" value="RGD"/>
</dbReference>
<dbReference type="GO" id="GO:0015125">
    <property type="term" value="F:bile acid transmembrane transporter activity"/>
    <property type="evidence" value="ECO:0000318"/>
    <property type="project" value="GO_Central"/>
</dbReference>
<dbReference type="GO" id="GO:0008514">
    <property type="term" value="F:organic anion transmembrane transporter activity"/>
    <property type="evidence" value="ECO:0000314"/>
    <property type="project" value="UniProtKB"/>
</dbReference>
<dbReference type="GO" id="GO:0015347">
    <property type="term" value="F:sodium-independent organic anion transmembrane transporter activity"/>
    <property type="evidence" value="ECO:0000318"/>
    <property type="project" value="GO_Central"/>
</dbReference>
<dbReference type="GO" id="GO:0015721">
    <property type="term" value="P:bile acid and bile salt transport"/>
    <property type="evidence" value="ECO:0000318"/>
    <property type="project" value="GO_Central"/>
</dbReference>
<dbReference type="GO" id="GO:0006811">
    <property type="term" value="P:monoatomic ion transport"/>
    <property type="evidence" value="ECO:0007669"/>
    <property type="project" value="UniProtKB-KW"/>
</dbReference>
<dbReference type="GO" id="GO:0015711">
    <property type="term" value="P:organic anion transport"/>
    <property type="evidence" value="ECO:0000270"/>
    <property type="project" value="RGD"/>
</dbReference>
<dbReference type="GO" id="GO:0035634">
    <property type="term" value="P:response to stilbenoid"/>
    <property type="evidence" value="ECO:0007669"/>
    <property type="project" value="Ensembl"/>
</dbReference>
<dbReference type="GO" id="GO:0033574">
    <property type="term" value="P:response to testosterone"/>
    <property type="evidence" value="ECO:0000270"/>
    <property type="project" value="RGD"/>
</dbReference>
<dbReference type="GO" id="GO:0043252">
    <property type="term" value="P:sodium-independent organic anion transport"/>
    <property type="evidence" value="ECO:0000318"/>
    <property type="project" value="GO_Central"/>
</dbReference>
<dbReference type="FunFam" id="1.20.1250.20:FF:000210">
    <property type="entry name" value="Solute carrier organic anion transporter family member"/>
    <property type="match status" value="1"/>
</dbReference>
<dbReference type="Gene3D" id="3.30.60.30">
    <property type="match status" value="1"/>
</dbReference>
<dbReference type="Gene3D" id="1.20.1250.20">
    <property type="entry name" value="MFS general substrate transporter like domains"/>
    <property type="match status" value="1"/>
</dbReference>
<dbReference type="InterPro" id="IPR002350">
    <property type="entry name" value="Kazal_dom"/>
</dbReference>
<dbReference type="InterPro" id="IPR036058">
    <property type="entry name" value="Kazal_dom_sf"/>
</dbReference>
<dbReference type="InterPro" id="IPR020846">
    <property type="entry name" value="MFS_dom"/>
</dbReference>
<dbReference type="InterPro" id="IPR036259">
    <property type="entry name" value="MFS_trans_sf"/>
</dbReference>
<dbReference type="InterPro" id="IPR004156">
    <property type="entry name" value="OATP"/>
</dbReference>
<dbReference type="NCBIfam" id="TIGR00805">
    <property type="entry name" value="oat"/>
    <property type="match status" value="1"/>
</dbReference>
<dbReference type="PANTHER" id="PTHR11388">
    <property type="entry name" value="ORGANIC ANION TRANSPORTER"/>
    <property type="match status" value="1"/>
</dbReference>
<dbReference type="PANTHER" id="PTHR11388:SF149">
    <property type="entry name" value="SOLUTE CARRIER ORGANIC ANION TRANSPORTER FAMILY MEMBER 1A1"/>
    <property type="match status" value="1"/>
</dbReference>
<dbReference type="Pfam" id="PF07648">
    <property type="entry name" value="Kazal_2"/>
    <property type="match status" value="1"/>
</dbReference>
<dbReference type="Pfam" id="PF03137">
    <property type="entry name" value="OATP"/>
    <property type="match status" value="1"/>
</dbReference>
<dbReference type="SUPFAM" id="SSF100895">
    <property type="entry name" value="Kazal-type serine protease inhibitors"/>
    <property type="match status" value="1"/>
</dbReference>
<dbReference type="SUPFAM" id="SSF103473">
    <property type="entry name" value="MFS general substrate transporter"/>
    <property type="match status" value="1"/>
</dbReference>
<dbReference type="PROSITE" id="PS51465">
    <property type="entry name" value="KAZAL_2"/>
    <property type="match status" value="1"/>
</dbReference>
<dbReference type="PROSITE" id="PS50850">
    <property type="entry name" value="MFS"/>
    <property type="match status" value="1"/>
</dbReference>
<protein>
    <recommendedName>
        <fullName evidence="10">Solute carrier organic anion transporter family member 1A1</fullName>
    </recommendedName>
    <alternativeName>
        <fullName>Organic anion-transporting polypeptide 1</fullName>
        <shortName>OATP-1</shortName>
    </alternativeName>
    <alternativeName>
        <fullName>Sodium-independent organic anion transporter 1</fullName>
    </alternativeName>
    <alternativeName>
        <fullName>Solute carrier family 21 member 1</fullName>
    </alternativeName>
</protein>